<keyword id="KW-0413">Isomerase</keyword>
<keyword id="KW-1185">Reference proteome</keyword>
<keyword id="KW-0819">tRNA processing</keyword>
<protein>
    <recommendedName>
        <fullName evidence="1">tRNA pseudouridine synthase D</fullName>
        <ecNumber evidence="1">5.4.99.27</ecNumber>
    </recommendedName>
    <alternativeName>
        <fullName evidence="1">tRNA pseudouridine(13) synthase</fullName>
    </alternativeName>
    <alternativeName>
        <fullName evidence="1">tRNA pseudouridylate synthase D</fullName>
    </alternativeName>
    <alternativeName>
        <fullName evidence="1">tRNA-uridine isomerase D</fullName>
    </alternativeName>
</protein>
<organism>
    <name type="scientific">Vibrio cholerae serotype O1 (strain ATCC 39315 / El Tor Inaba N16961)</name>
    <dbReference type="NCBI Taxonomy" id="243277"/>
    <lineage>
        <taxon>Bacteria</taxon>
        <taxon>Pseudomonadati</taxon>
        <taxon>Pseudomonadota</taxon>
        <taxon>Gammaproteobacteria</taxon>
        <taxon>Vibrionales</taxon>
        <taxon>Vibrionaceae</taxon>
        <taxon>Vibrio</taxon>
    </lineage>
</organism>
<sequence length="361" mass="40240">MTDILSPLAYLCGKPTAKAKLKALPEHFQVNEVLGYSLTGHGEHLMVRIRKTGENTSFVANELAKACGVPSRAVSWAGLKDRHAVTEQWLSVHLPNGETPDFSAFLAQYPSIEILEVTRHDKKLRPGDLQGNEFVVTLSEVSDVAAVLSRLETVAELGVPNYFGSQRFGRHGNNLSEARRWGRDNVRSRNQNQRSLYLSAARSWIFNQIVSKRIEQGCFARFIEGDIALAEQQMFNVDGDLALWDQRLQAGEVAISAALAGDNALPTSGQALPLEQAELDAEPDLMALIRGNRMRHDRRAIALKAQNLSWQVQEDQITLRFSLDAGSFATSLVRELIEEIPVVRHYDQGHEQESRDSESED</sequence>
<evidence type="ECO:0000255" key="1">
    <source>
        <dbReference type="HAMAP-Rule" id="MF_01082"/>
    </source>
</evidence>
<accession>Q9KUJ0</accession>
<name>TRUD_VIBCH</name>
<gene>
    <name evidence="1" type="primary">truD</name>
    <name type="ordered locus">VC_0530</name>
</gene>
<proteinExistence type="inferred from homology"/>
<reference key="1">
    <citation type="journal article" date="2000" name="Nature">
        <title>DNA sequence of both chromosomes of the cholera pathogen Vibrio cholerae.</title>
        <authorList>
            <person name="Heidelberg J.F."/>
            <person name="Eisen J.A."/>
            <person name="Nelson W.C."/>
            <person name="Clayton R.A."/>
            <person name="Gwinn M.L."/>
            <person name="Dodson R.J."/>
            <person name="Haft D.H."/>
            <person name="Hickey E.K."/>
            <person name="Peterson J.D."/>
            <person name="Umayam L.A."/>
            <person name="Gill S.R."/>
            <person name="Nelson K.E."/>
            <person name="Read T.D."/>
            <person name="Tettelin H."/>
            <person name="Richardson D.L."/>
            <person name="Ermolaeva M.D."/>
            <person name="Vamathevan J.J."/>
            <person name="Bass S."/>
            <person name="Qin H."/>
            <person name="Dragoi I."/>
            <person name="Sellers P."/>
            <person name="McDonald L.A."/>
            <person name="Utterback T.R."/>
            <person name="Fleischmann R.D."/>
            <person name="Nierman W.C."/>
            <person name="White O."/>
            <person name="Salzberg S.L."/>
            <person name="Smith H.O."/>
            <person name="Colwell R.R."/>
            <person name="Mekalanos J.J."/>
            <person name="Venter J.C."/>
            <person name="Fraser C.M."/>
        </authorList>
    </citation>
    <scope>NUCLEOTIDE SEQUENCE [LARGE SCALE GENOMIC DNA]</scope>
    <source>
        <strain>ATCC 39315 / El Tor Inaba N16961</strain>
    </source>
</reference>
<comment type="function">
    <text evidence="1">Responsible for synthesis of pseudouridine from uracil-13 in transfer RNAs.</text>
</comment>
<comment type="catalytic activity">
    <reaction evidence="1">
        <text>uridine(13) in tRNA = pseudouridine(13) in tRNA</text>
        <dbReference type="Rhea" id="RHEA:42540"/>
        <dbReference type="Rhea" id="RHEA-COMP:10105"/>
        <dbReference type="Rhea" id="RHEA-COMP:10106"/>
        <dbReference type="ChEBI" id="CHEBI:65314"/>
        <dbReference type="ChEBI" id="CHEBI:65315"/>
        <dbReference type="EC" id="5.4.99.27"/>
    </reaction>
</comment>
<comment type="similarity">
    <text evidence="1">Belongs to the pseudouridine synthase TruD family.</text>
</comment>
<dbReference type="EC" id="5.4.99.27" evidence="1"/>
<dbReference type="EMBL" id="AE003852">
    <property type="protein sequence ID" value="AAF93698.1"/>
    <property type="molecule type" value="Genomic_DNA"/>
</dbReference>
<dbReference type="PIR" id="E82311">
    <property type="entry name" value="E82311"/>
</dbReference>
<dbReference type="RefSeq" id="NP_230181.1">
    <property type="nucleotide sequence ID" value="NC_002505.1"/>
</dbReference>
<dbReference type="RefSeq" id="WP_000129752.1">
    <property type="nucleotide sequence ID" value="NZ_LT906614.1"/>
</dbReference>
<dbReference type="SMR" id="Q9KUJ0"/>
<dbReference type="STRING" id="243277.VC_0530"/>
<dbReference type="DNASU" id="2615821"/>
<dbReference type="EnsemblBacteria" id="AAF93698">
    <property type="protein sequence ID" value="AAF93698"/>
    <property type="gene ID" value="VC_0530"/>
</dbReference>
<dbReference type="KEGG" id="vch:VC_0530"/>
<dbReference type="PATRIC" id="fig|243277.26.peg.506"/>
<dbReference type="eggNOG" id="COG0585">
    <property type="taxonomic scope" value="Bacteria"/>
</dbReference>
<dbReference type="HOGENOM" id="CLU_005281_4_0_6"/>
<dbReference type="Proteomes" id="UP000000584">
    <property type="component" value="Chromosome 1"/>
</dbReference>
<dbReference type="GO" id="GO:0005829">
    <property type="term" value="C:cytosol"/>
    <property type="evidence" value="ECO:0000318"/>
    <property type="project" value="GO_Central"/>
</dbReference>
<dbReference type="GO" id="GO:0009982">
    <property type="term" value="F:pseudouridine synthase activity"/>
    <property type="evidence" value="ECO:0000318"/>
    <property type="project" value="GO_Central"/>
</dbReference>
<dbReference type="GO" id="GO:0003723">
    <property type="term" value="F:RNA binding"/>
    <property type="evidence" value="ECO:0007669"/>
    <property type="project" value="InterPro"/>
</dbReference>
<dbReference type="GO" id="GO:0160150">
    <property type="term" value="F:tRNA pseudouridine(13) synthase activity"/>
    <property type="evidence" value="ECO:0007669"/>
    <property type="project" value="UniProtKB-EC"/>
</dbReference>
<dbReference type="GO" id="GO:0001522">
    <property type="term" value="P:pseudouridine synthesis"/>
    <property type="evidence" value="ECO:0000318"/>
    <property type="project" value="GO_Central"/>
</dbReference>
<dbReference type="GO" id="GO:0031119">
    <property type="term" value="P:tRNA pseudouridine synthesis"/>
    <property type="evidence" value="ECO:0007669"/>
    <property type="project" value="UniProtKB-UniRule"/>
</dbReference>
<dbReference type="CDD" id="cd02575">
    <property type="entry name" value="PseudoU_synth_EcTruD"/>
    <property type="match status" value="1"/>
</dbReference>
<dbReference type="Gene3D" id="3.30.2350.20">
    <property type="entry name" value="TruD, catalytic domain"/>
    <property type="match status" value="1"/>
</dbReference>
<dbReference type="Gene3D" id="3.30.2340.10">
    <property type="entry name" value="TruD, insertion domain"/>
    <property type="match status" value="1"/>
</dbReference>
<dbReference type="HAMAP" id="MF_01082">
    <property type="entry name" value="TruD"/>
    <property type="match status" value="1"/>
</dbReference>
<dbReference type="InterPro" id="IPR020103">
    <property type="entry name" value="PsdUridine_synth_cat_dom_sf"/>
</dbReference>
<dbReference type="InterPro" id="IPR001656">
    <property type="entry name" value="PsdUridine_synth_TruD"/>
</dbReference>
<dbReference type="InterPro" id="IPR020119">
    <property type="entry name" value="PsdUridine_synth_TruD_CS"/>
</dbReference>
<dbReference type="InterPro" id="IPR011760">
    <property type="entry name" value="PsdUridine_synth_TruD_insert"/>
</dbReference>
<dbReference type="InterPro" id="IPR042214">
    <property type="entry name" value="TruD_catalytic"/>
</dbReference>
<dbReference type="InterPro" id="IPR043165">
    <property type="entry name" value="TruD_insert_sf"/>
</dbReference>
<dbReference type="InterPro" id="IPR050170">
    <property type="entry name" value="TruD_pseudoU_synthase"/>
</dbReference>
<dbReference type="NCBIfam" id="NF002155">
    <property type="entry name" value="PRK00984.1-4"/>
    <property type="match status" value="1"/>
</dbReference>
<dbReference type="PANTHER" id="PTHR47811">
    <property type="entry name" value="TRNA PSEUDOURIDINE SYNTHASE D"/>
    <property type="match status" value="1"/>
</dbReference>
<dbReference type="PANTHER" id="PTHR47811:SF1">
    <property type="entry name" value="TRNA PSEUDOURIDINE SYNTHASE D"/>
    <property type="match status" value="1"/>
</dbReference>
<dbReference type="Pfam" id="PF01142">
    <property type="entry name" value="TruD"/>
    <property type="match status" value="2"/>
</dbReference>
<dbReference type="SUPFAM" id="SSF55120">
    <property type="entry name" value="Pseudouridine synthase"/>
    <property type="match status" value="1"/>
</dbReference>
<dbReference type="PROSITE" id="PS50984">
    <property type="entry name" value="TRUD"/>
    <property type="match status" value="1"/>
</dbReference>
<dbReference type="PROSITE" id="PS01268">
    <property type="entry name" value="UPF0024"/>
    <property type="match status" value="1"/>
</dbReference>
<feature type="chain" id="PRO_0000152525" description="tRNA pseudouridine synthase D">
    <location>
        <begin position="1"/>
        <end position="361"/>
    </location>
</feature>
<feature type="domain" description="TRUD" evidence="1">
    <location>
        <begin position="158"/>
        <end position="303"/>
    </location>
</feature>
<feature type="active site" description="Nucleophile" evidence="1">
    <location>
        <position position="81"/>
    </location>
</feature>